<keyword id="KW-0067">ATP-binding</keyword>
<keyword id="KW-1003">Cell membrane</keyword>
<keyword id="KW-0270">Exopolysaccharide synthesis</keyword>
<keyword id="KW-0472">Membrane</keyword>
<keyword id="KW-0547">Nucleotide-binding</keyword>
<keyword id="KW-0614">Plasmid</keyword>
<keyword id="KW-1185">Reference proteome</keyword>
<keyword id="KW-0812">Transmembrane</keyword>
<keyword id="KW-1133">Transmembrane helix</keyword>
<keyword id="KW-0813">Transport</keyword>
<reference key="1">
    <citation type="journal article" date="1993" name="J. Bacteriol.">
        <title>Family of glycosyl transferases needed for the synthesis of succinoglycan by Rhizobium meliloti.</title>
        <authorList>
            <person name="Glucksmann M.A."/>
            <person name="Reuber T.L."/>
            <person name="Walker G.C."/>
        </authorList>
    </citation>
    <scope>NUCLEOTIDE SEQUENCE [GENOMIC DNA]</scope>
    <source>
        <strain>1021</strain>
    </source>
</reference>
<reference key="2">
    <citation type="journal article" date="1993" name="J. Bacteriol.">
        <title>Genes needed for the modification, polymerization, export, and processing of succinoglycan by Rhizobium meliloti: a model for succinoglycan biosynthesis.</title>
        <authorList>
            <person name="Glucksmann M.A."/>
            <person name="Reuber T.L."/>
            <person name="Walker G.C."/>
        </authorList>
    </citation>
    <scope>NUCLEOTIDE SEQUENCE [GENOMIC DNA]</scope>
    <source>
        <strain>1021</strain>
    </source>
</reference>
<reference key="3">
    <citation type="journal article" date="1993" name="Mol. Gen. Genet.">
        <title>Identification and analysis of the Rhizobium meliloti exoAMONP genes involved in exopolysaccharide biosynthesis and mapping of promoters located on the exoHKLAMONP fragment.</title>
        <authorList>
            <person name="Becker A."/>
            <person name="Kleickmann A."/>
            <person name="Keller M."/>
            <person name="Arnold W."/>
            <person name="Puehler A."/>
        </authorList>
    </citation>
    <scope>NUCLEOTIDE SEQUENCE [GENOMIC DNA]</scope>
    <source>
        <strain>RCR2011 / SU47</strain>
    </source>
</reference>
<reference key="4">
    <citation type="journal article" date="2001" name="Proc. Natl. Acad. Sci. U.S.A.">
        <title>The complete sequence of the 1,683-kb pSymB megaplasmid from the N2-fixing endosymbiont Sinorhizobium meliloti.</title>
        <authorList>
            <person name="Finan T.M."/>
            <person name="Weidner S."/>
            <person name="Wong K."/>
            <person name="Buhrmester J."/>
            <person name="Chain P."/>
            <person name="Vorhoelter F.J."/>
            <person name="Hernandez-Lucas I."/>
            <person name="Becker A."/>
            <person name="Cowie A."/>
            <person name="Gouzy J."/>
            <person name="Golding B."/>
            <person name="Puehler A."/>
        </authorList>
    </citation>
    <scope>NUCLEOTIDE SEQUENCE [LARGE SCALE GENOMIC DNA]</scope>
    <source>
        <strain>1021</strain>
    </source>
</reference>
<reference key="5">
    <citation type="journal article" date="2001" name="Science">
        <title>The composite genome of the legume symbiont Sinorhizobium meliloti.</title>
        <authorList>
            <person name="Galibert F."/>
            <person name="Finan T.M."/>
            <person name="Long S.R."/>
            <person name="Puehler A."/>
            <person name="Abola P."/>
            <person name="Ampe F."/>
            <person name="Barloy-Hubler F."/>
            <person name="Barnett M.J."/>
            <person name="Becker A."/>
            <person name="Boistard P."/>
            <person name="Bothe G."/>
            <person name="Boutry M."/>
            <person name="Bowser L."/>
            <person name="Buhrmester J."/>
            <person name="Cadieu E."/>
            <person name="Capela D."/>
            <person name="Chain P."/>
            <person name="Cowie A."/>
            <person name="Davis R.W."/>
            <person name="Dreano S."/>
            <person name="Federspiel N.A."/>
            <person name="Fisher R.F."/>
            <person name="Gloux S."/>
            <person name="Godrie T."/>
            <person name="Goffeau A."/>
            <person name="Golding B."/>
            <person name="Gouzy J."/>
            <person name="Gurjal M."/>
            <person name="Hernandez-Lucas I."/>
            <person name="Hong A."/>
            <person name="Huizar L."/>
            <person name="Hyman R.W."/>
            <person name="Jones T."/>
            <person name="Kahn D."/>
            <person name="Kahn M.L."/>
            <person name="Kalman S."/>
            <person name="Keating D.H."/>
            <person name="Kiss E."/>
            <person name="Komp C."/>
            <person name="Lelaure V."/>
            <person name="Masuy D."/>
            <person name="Palm C."/>
            <person name="Peck M.C."/>
            <person name="Pohl T.M."/>
            <person name="Portetelle D."/>
            <person name="Purnelle B."/>
            <person name="Ramsperger U."/>
            <person name="Surzycki R."/>
            <person name="Thebault P."/>
            <person name="Vandenbol M."/>
            <person name="Vorhoelter F.J."/>
            <person name="Weidner S."/>
            <person name="Wells D.H."/>
            <person name="Wong K."/>
            <person name="Yeh K.-C."/>
            <person name="Batut J."/>
        </authorList>
    </citation>
    <scope>NUCLEOTIDE SEQUENCE [LARGE SCALE GENOMIC DNA]</scope>
    <source>
        <strain>1021</strain>
    </source>
</reference>
<dbReference type="EMBL" id="L20758">
    <property type="protein sequence ID" value="AAA16042.1"/>
    <property type="molecule type" value="Unassigned_DNA"/>
</dbReference>
<dbReference type="EMBL" id="Z22636">
    <property type="protein sequence ID" value="CAA80349.1"/>
    <property type="molecule type" value="Genomic_DNA"/>
</dbReference>
<dbReference type="EMBL" id="AL591985">
    <property type="protein sequence ID" value="CAC49486.1"/>
    <property type="molecule type" value="Genomic_DNA"/>
</dbReference>
<dbReference type="PIR" id="F95977">
    <property type="entry name" value="F95977"/>
</dbReference>
<dbReference type="PIR" id="S37031">
    <property type="entry name" value="S37031"/>
</dbReference>
<dbReference type="RefSeq" id="NP_437626.1">
    <property type="nucleotide sequence ID" value="NC_003078.1"/>
</dbReference>
<dbReference type="RefSeq" id="WP_010975922.1">
    <property type="nucleotide sequence ID" value="NC_003078.1"/>
</dbReference>
<dbReference type="SMR" id="P33698"/>
<dbReference type="TCDB" id="8.A.3.1.1">
    <property type="family name" value="the cytoplasmic membrane-periplasmic auxiliary-1 (mpa1) protein with cytoplasmic (c) domain (mpa1-c or mpa1+c) family"/>
</dbReference>
<dbReference type="EnsemblBacteria" id="CAC49486">
    <property type="protein sequence ID" value="CAC49486"/>
    <property type="gene ID" value="SM_b20961"/>
</dbReference>
<dbReference type="KEGG" id="sme:SM_b20961"/>
<dbReference type="PATRIC" id="fig|266834.11.peg.6015"/>
<dbReference type="eggNOG" id="COG0489">
    <property type="taxonomic scope" value="Bacteria"/>
</dbReference>
<dbReference type="eggNOG" id="COG3206">
    <property type="taxonomic scope" value="Bacteria"/>
</dbReference>
<dbReference type="HOGENOM" id="CLU_009912_2_0_5"/>
<dbReference type="OrthoDB" id="230260at2"/>
<dbReference type="BioCyc" id="MetaCyc:SM_B20961-MONOMER"/>
<dbReference type="UniPathway" id="UPA00631"/>
<dbReference type="Proteomes" id="UP000001976">
    <property type="component" value="Plasmid pSymB"/>
</dbReference>
<dbReference type="GO" id="GO:0005886">
    <property type="term" value="C:plasma membrane"/>
    <property type="evidence" value="ECO:0007669"/>
    <property type="project" value="UniProtKB-SubCell"/>
</dbReference>
<dbReference type="GO" id="GO:0005524">
    <property type="term" value="F:ATP binding"/>
    <property type="evidence" value="ECO:0007669"/>
    <property type="project" value="UniProtKB-KW"/>
</dbReference>
<dbReference type="GO" id="GO:0004713">
    <property type="term" value="F:protein tyrosine kinase activity"/>
    <property type="evidence" value="ECO:0007669"/>
    <property type="project" value="TreeGrafter"/>
</dbReference>
<dbReference type="GO" id="GO:0000271">
    <property type="term" value="P:polysaccharide biosynthetic process"/>
    <property type="evidence" value="ECO:0007669"/>
    <property type="project" value="UniProtKB-KW"/>
</dbReference>
<dbReference type="CDD" id="cd05387">
    <property type="entry name" value="BY-kinase"/>
    <property type="match status" value="1"/>
</dbReference>
<dbReference type="Gene3D" id="3.40.50.300">
    <property type="entry name" value="P-loop containing nucleotide triphosphate hydrolases"/>
    <property type="match status" value="1"/>
</dbReference>
<dbReference type="InterPro" id="IPR050445">
    <property type="entry name" value="Bact_polysacc_biosynth/exp"/>
</dbReference>
<dbReference type="InterPro" id="IPR002586">
    <property type="entry name" value="CobQ/CobB/MinD/ParA_Nub-bd_dom"/>
</dbReference>
<dbReference type="InterPro" id="IPR005700">
    <property type="entry name" value="EPS_ExoP-like"/>
</dbReference>
<dbReference type="InterPro" id="IPR032807">
    <property type="entry name" value="GNVR"/>
</dbReference>
<dbReference type="InterPro" id="IPR003856">
    <property type="entry name" value="LPS_length_determ_N_term"/>
</dbReference>
<dbReference type="InterPro" id="IPR027417">
    <property type="entry name" value="P-loop_NTPase"/>
</dbReference>
<dbReference type="InterPro" id="IPR005702">
    <property type="entry name" value="Wzc-like_C"/>
</dbReference>
<dbReference type="NCBIfam" id="TIGR01007">
    <property type="entry name" value="eps_fam"/>
    <property type="match status" value="1"/>
</dbReference>
<dbReference type="NCBIfam" id="TIGR01005">
    <property type="entry name" value="eps_transp_fam"/>
    <property type="match status" value="1"/>
</dbReference>
<dbReference type="PANTHER" id="PTHR32309:SF13">
    <property type="entry name" value="FERRIC ENTEROBACTIN TRANSPORT PROTEIN FEPE"/>
    <property type="match status" value="1"/>
</dbReference>
<dbReference type="PANTHER" id="PTHR32309">
    <property type="entry name" value="TYROSINE-PROTEIN KINASE"/>
    <property type="match status" value="1"/>
</dbReference>
<dbReference type="Pfam" id="PF01656">
    <property type="entry name" value="CbiA"/>
    <property type="match status" value="1"/>
</dbReference>
<dbReference type="Pfam" id="PF13807">
    <property type="entry name" value="GNVR"/>
    <property type="match status" value="1"/>
</dbReference>
<dbReference type="Pfam" id="PF02706">
    <property type="entry name" value="Wzz"/>
    <property type="match status" value="1"/>
</dbReference>
<dbReference type="SUPFAM" id="SSF52540">
    <property type="entry name" value="P-loop containing nucleoside triphosphate hydrolases"/>
    <property type="match status" value="1"/>
</dbReference>
<feature type="chain" id="PRO_0000087125" description="Succinoglycan biosynthesis transport protein ExoP">
    <location>
        <begin position="1"/>
        <end position="786"/>
    </location>
</feature>
<feature type="topological domain" description="Cytoplasmic" evidence="1">
    <location>
        <begin position="1"/>
        <end position="42"/>
    </location>
</feature>
<feature type="transmembrane region" description="Helical" evidence="1">
    <location>
        <begin position="43"/>
        <end position="66"/>
    </location>
</feature>
<feature type="topological domain" description="Periplasmic" evidence="1">
    <location>
        <begin position="67"/>
        <end position="689"/>
    </location>
</feature>
<feature type="transmembrane region" description="Helical" evidence="1">
    <location>
        <begin position="690"/>
        <end position="711"/>
    </location>
</feature>
<feature type="topological domain" description="Cytoplasmic" evidence="1">
    <location>
        <begin position="712"/>
        <end position="786"/>
    </location>
</feature>
<feature type="binding site" evidence="1">
    <location>
        <begin position="583"/>
        <end position="590"/>
    </location>
    <ligand>
        <name>ATP</name>
        <dbReference type="ChEBI" id="CHEBI:30616"/>
    </ligand>
</feature>
<accession>P33698</accession>
<geneLocation type="plasmid">
    <name>pSymB</name>
    <name>megaplasmid 2</name>
</geneLocation>
<evidence type="ECO:0000255" key="1"/>
<evidence type="ECO:0000305" key="2"/>
<comment type="pathway">
    <text>Glycan metabolism; exopolysaccharide biosynthesis.</text>
</comment>
<comment type="subcellular location">
    <subcellularLocation>
        <location evidence="2">Cell membrane</location>
        <topology evidence="2">Multi-pass membrane protein</topology>
    </subcellularLocation>
</comment>
<comment type="similarity">
    <text evidence="2">To B.solanacearum EpsB.</text>
</comment>
<gene>
    <name type="primary">exoP</name>
    <name type="ordered locus">RB1086</name>
    <name type="ORF">SMb20961</name>
</gene>
<organism>
    <name type="scientific">Rhizobium meliloti (strain 1021)</name>
    <name type="common">Ensifer meliloti</name>
    <name type="synonym">Sinorhizobium meliloti</name>
    <dbReference type="NCBI Taxonomy" id="266834"/>
    <lineage>
        <taxon>Bacteria</taxon>
        <taxon>Pseudomonadati</taxon>
        <taxon>Pseudomonadota</taxon>
        <taxon>Alphaproteobacteria</taxon>
        <taxon>Hyphomicrobiales</taxon>
        <taxon>Rhizobiaceae</taxon>
        <taxon>Sinorhizobium/Ensifer group</taxon>
        <taxon>Sinorhizobium</taxon>
    </lineage>
</organism>
<proteinExistence type="predicted"/>
<name>EXOP_RHIME</name>
<protein>
    <recommendedName>
        <fullName>Succinoglycan biosynthesis transport protein ExoP</fullName>
    </recommendedName>
</protein>
<sequence>MNRTAPMKQRSVPLSSIMPSEEQSDGFIDLDRLVAAVFRRARLVAAFVVLFIALGAAYLLFATPYYTSMTQILLDENLSKYAEEEPTPVNSQMLDTQIASAVEILKSGELALRVVDKLKLSENDTILNPPRSPVDMVKEWLKTATGLFSGGPDVTEEAARNGRRQKAAAIIQQSLAVERVSRSSVVAVAFRSSDPLLAATIARGYASAYLTDQLNANFEATERASVWLQERLTDLQQRSQAAALEVAHFRAENGLTAARGELMSEQQMADLNSQLIVAQADTASASARYDQYKSIVDQGPENAVKNATISSKEGDNSVIRDLRTRYLTVGKREREVSDNFGADHPQAVSLRAEQEDVARQIYQELQQLTASYKNEYEVAQSREESLRKSIQGIAGKTSDASEQLVQLRELEQKAAALKTLYESYLGRYEQATQQQSFPIAKARVISEAGVPVSPSSPKKTMTLALSAVLGMMVGGAYAAFLEFRERTFRLEGNIRSILGHRSLGYVPLLGTRMKKKAQLVHAHFGSVKRHDEAVDDTMPFQRLSRIVVDAPRSTFAETFRNAKLACDQMLAGSESRVIAIASALPDEGKSIIAANFAALLAASGKRTLLIDADIRKPGLTQMITPAPRTGLVETLIGEASWPAGIKVDQRTKLAILPAGGASHQRHQSNELLASPAMANLIENARNAFDYVVVDLAALAPVVDAKAFAPLADGILFVVEWGRTPSRLVRDLLHSEPLINSKVLGVILNKTDMNELGKYSDFDGAEKYRHRYGKYYVENTITENTAA</sequence>